<organism>
    <name type="scientific">Homo sapiens</name>
    <name type="common">Human</name>
    <dbReference type="NCBI Taxonomy" id="9606"/>
    <lineage>
        <taxon>Eukaryota</taxon>
        <taxon>Metazoa</taxon>
        <taxon>Chordata</taxon>
        <taxon>Craniata</taxon>
        <taxon>Vertebrata</taxon>
        <taxon>Euteleostomi</taxon>
        <taxon>Mammalia</taxon>
        <taxon>Eutheria</taxon>
        <taxon>Euarchontoglires</taxon>
        <taxon>Primates</taxon>
        <taxon>Haplorrhini</taxon>
        <taxon>Catarrhini</taxon>
        <taxon>Hominidae</taxon>
        <taxon>Homo</taxon>
    </lineage>
</organism>
<keyword id="KW-1003">Cell membrane</keyword>
<keyword id="KW-1015">Disulfide bond</keyword>
<keyword id="KW-0297">G-protein coupled receptor</keyword>
<keyword id="KW-0325">Glycoprotein</keyword>
<keyword id="KW-0472">Membrane</keyword>
<keyword id="KW-0552">Olfaction</keyword>
<keyword id="KW-0675">Receptor</keyword>
<keyword id="KW-1185">Reference proteome</keyword>
<keyword id="KW-0716">Sensory transduction</keyword>
<keyword id="KW-0807">Transducer</keyword>
<keyword id="KW-0812">Transmembrane</keyword>
<keyword id="KW-1133">Transmembrane helix</keyword>
<feature type="chain" id="PRO_0000312527" description="Olfactory receptor 52A4">
    <location>
        <begin position="1"/>
        <end position="304"/>
    </location>
</feature>
<feature type="topological domain" description="Extracellular" evidence="1">
    <location>
        <begin position="1"/>
        <end position="32"/>
    </location>
</feature>
<feature type="transmembrane region" description="Helical; Name=1" evidence="1">
    <location>
        <begin position="33"/>
        <end position="53"/>
    </location>
</feature>
<feature type="topological domain" description="Cytoplasmic" evidence="1">
    <location>
        <begin position="54"/>
        <end position="61"/>
    </location>
</feature>
<feature type="transmembrane region" description="Helical; Name=2" evidence="1">
    <location>
        <begin position="62"/>
        <end position="82"/>
    </location>
</feature>
<feature type="topological domain" description="Extracellular" evidence="1">
    <location>
        <begin position="83"/>
        <end position="103"/>
    </location>
</feature>
<feature type="transmembrane region" description="Helical; Name=3" evidence="1">
    <location>
        <begin position="104"/>
        <end position="124"/>
    </location>
</feature>
<feature type="topological domain" description="Cytoplasmic" evidence="1">
    <location>
        <begin position="125"/>
        <end position="146"/>
    </location>
</feature>
<feature type="transmembrane region" description="Helical; Name=4" evidence="1">
    <location>
        <begin position="147"/>
        <end position="167"/>
    </location>
</feature>
<feature type="topological domain" description="Extracellular" evidence="1">
    <location>
        <begin position="168"/>
        <end position="203"/>
    </location>
</feature>
<feature type="transmembrane region" description="Helical; Name=5" evidence="1">
    <location>
        <begin position="204"/>
        <end position="224"/>
    </location>
</feature>
<feature type="topological domain" description="Cytoplasmic" evidence="1">
    <location>
        <begin position="225"/>
        <end position="255"/>
    </location>
</feature>
<feature type="transmembrane region" description="Helical; Name=6" evidence="1">
    <location>
        <begin position="256"/>
        <end position="276"/>
    </location>
</feature>
<feature type="topological domain" description="Extracellular" evidence="1">
    <location>
        <begin position="277"/>
        <end position="279"/>
    </location>
</feature>
<feature type="transmembrane region" description="Helical; Name=7" evidence="1">
    <location>
        <begin position="280"/>
        <end position="300"/>
    </location>
</feature>
<feature type="topological domain" description="Cytoplasmic" evidence="1">
    <location>
        <begin position="301"/>
        <end position="304"/>
    </location>
</feature>
<feature type="glycosylation site" description="N-linked (GlcNAc...) asparagine" evidence="1">
    <location>
        <position position="7"/>
    </location>
</feature>
<feature type="disulfide bond" evidence="2">
    <location>
        <begin position="101"/>
        <end position="184"/>
    </location>
</feature>
<feature type="sequence variant" id="VAR_037540" description="In dbSNP:rs7947334.">
    <original>D</original>
    <variation>G</variation>
    <location>
        <position position="87"/>
    </location>
</feature>
<feature type="sequence variant" id="VAR_037541" description="In dbSNP:rs10837375." evidence="3">
    <original>Y</original>
    <variation>S</variation>
    <location>
        <position position="180"/>
    </location>
</feature>
<feature type="sequence variant" id="VAR_037542" description="In dbSNP:rs4426129." evidence="3">
    <original>C</original>
    <variation>R</variation>
    <location>
        <position position="277"/>
    </location>
</feature>
<feature type="sequence variant" id="VAR_062081" description="In dbSNP:rs10837374." evidence="3">
    <original>T</original>
    <variation>A</variation>
    <location>
        <position position="303"/>
    </location>
</feature>
<comment type="function">
    <text evidence="4">Odorant receptor.</text>
</comment>
<comment type="subcellular location">
    <subcellularLocation>
        <location>Cell membrane</location>
        <topology>Multi-pass membrane protein</topology>
    </subcellularLocation>
</comment>
<comment type="similarity">
    <text evidence="2">Belongs to the G-protein coupled receptor 1 family.</text>
</comment>
<comment type="online information" name="Human Olfactory Receptor Data Exploratorium (HORDE)">
    <link uri="http://genome.weizmann.ac.il/horde/card/index/symbol:OR52A4"/>
</comment>
<gene>
    <name evidence="5" type="primary">OR52A4P</name>
    <name type="synonym">OR52A4</name>
</gene>
<accession>A6NMU1</accession>
<accession>B9EIN7</accession>
<name>O52A4_HUMAN</name>
<protein>
    <recommendedName>
        <fullName>Olfactory receptor 52A4</fullName>
    </recommendedName>
</protein>
<sequence>MALPITNGTLFMPFVLTFIGIPGFESVQCWIGIPFCATYVIALIGNSLLLIIIKSEPSLHEPMYIFLATLGATDISLSTSIVPKMLDIFWFHLPEIYFDACLFQMWLIHTFQGIESGVLLAMALDRCVAICYPLRRAIVFTRQLVTYIVVGVTLRPAILVIPCLLLIKCHLKLYRTKLIYHTYCERVALVKLATEDVYINKVYGILGAFIVGGLDFIFITLSYIQIFITVFHLPLKEARLKVFNTCIPHIYVFFQFYLLAFFFIFYSQIWILYPIICTYHLVQSLPTGPTIPQPLYLWVKDQTH</sequence>
<dbReference type="EMBL" id="AC113331">
    <property type="status" value="NOT_ANNOTATED_CDS"/>
    <property type="molecule type" value="Genomic_DNA"/>
</dbReference>
<dbReference type="EMBL" id="BC140752">
    <property type="protein sequence ID" value="AAI40753.1"/>
    <property type="molecule type" value="mRNA"/>
</dbReference>
<dbReference type="SMR" id="A6NMU1"/>
<dbReference type="FunCoup" id="A6NMU1">
    <property type="interactions" value="3"/>
</dbReference>
<dbReference type="GlyCosmos" id="A6NMU1">
    <property type="glycosylation" value="1 site, No reported glycans"/>
</dbReference>
<dbReference type="GlyGen" id="A6NMU1">
    <property type="glycosylation" value="2 sites"/>
</dbReference>
<dbReference type="BioMuta" id="HGNC:19579"/>
<dbReference type="MassIVE" id="A6NMU1"/>
<dbReference type="PeptideAtlas" id="A6NMU1"/>
<dbReference type="AGR" id="HGNC:19579"/>
<dbReference type="GeneCards" id="OR52A4P"/>
<dbReference type="HGNC" id="HGNC:19579">
    <property type="gene designation" value="OR52A4P"/>
</dbReference>
<dbReference type="neXtProt" id="NX_A6NMU1"/>
<dbReference type="InParanoid" id="A6NMU1"/>
<dbReference type="PAN-GO" id="A6NMU1">
    <property type="GO annotations" value="0 GO annotations based on evolutionary models"/>
</dbReference>
<dbReference type="PhylomeDB" id="A6NMU1"/>
<dbReference type="PathwayCommons" id="A6NMU1"/>
<dbReference type="Reactome" id="R-HSA-9752946">
    <property type="pathway name" value="Expression and translocation of olfactory receptors"/>
</dbReference>
<dbReference type="Pharos" id="A6NMU1">
    <property type="development level" value="Tdark"/>
</dbReference>
<dbReference type="PRO" id="PR:A6NMU1"/>
<dbReference type="Proteomes" id="UP000005640">
    <property type="component" value="Unplaced"/>
</dbReference>
<dbReference type="RNAct" id="A6NMU1">
    <property type="molecule type" value="protein"/>
</dbReference>
<dbReference type="GO" id="GO:0005886">
    <property type="term" value="C:plasma membrane"/>
    <property type="evidence" value="ECO:0000318"/>
    <property type="project" value="GO_Central"/>
</dbReference>
<dbReference type="GO" id="GO:0004930">
    <property type="term" value="F:G protein-coupled receptor activity"/>
    <property type="evidence" value="ECO:0007669"/>
    <property type="project" value="UniProtKB-KW"/>
</dbReference>
<dbReference type="GO" id="GO:0004984">
    <property type="term" value="F:olfactory receptor activity"/>
    <property type="evidence" value="ECO:0000318"/>
    <property type="project" value="GO_Central"/>
</dbReference>
<dbReference type="FunFam" id="1.20.1070.10:FF:000441">
    <property type="entry name" value="Olfactory receptor"/>
    <property type="match status" value="1"/>
</dbReference>
<dbReference type="Gene3D" id="1.20.1070.10">
    <property type="entry name" value="Rhodopsin 7-helix transmembrane proteins"/>
    <property type="match status" value="1"/>
</dbReference>
<dbReference type="InterPro" id="IPR000276">
    <property type="entry name" value="GPCR_Rhodpsn"/>
</dbReference>
<dbReference type="InterPro" id="IPR017452">
    <property type="entry name" value="GPCR_Rhodpsn_7TM"/>
</dbReference>
<dbReference type="InterPro" id="IPR000725">
    <property type="entry name" value="Olfact_rcpt"/>
</dbReference>
<dbReference type="InterPro" id="IPR050402">
    <property type="entry name" value="OR51/52/56-like"/>
</dbReference>
<dbReference type="PANTHER" id="PTHR26450:SF121">
    <property type="entry name" value="OLFACTORY RECEPTOR 52A4"/>
    <property type="match status" value="1"/>
</dbReference>
<dbReference type="PANTHER" id="PTHR26450">
    <property type="entry name" value="OLFACTORY RECEPTOR 56B1-RELATED"/>
    <property type="match status" value="1"/>
</dbReference>
<dbReference type="Pfam" id="PF13853">
    <property type="entry name" value="7tm_4"/>
    <property type="match status" value="1"/>
</dbReference>
<dbReference type="PRINTS" id="PR00245">
    <property type="entry name" value="OLFACTORYR"/>
</dbReference>
<dbReference type="SUPFAM" id="SSF81321">
    <property type="entry name" value="Family A G protein-coupled receptor-like"/>
    <property type="match status" value="1"/>
</dbReference>
<dbReference type="PROSITE" id="PS00237">
    <property type="entry name" value="G_PROTEIN_RECEP_F1_1"/>
    <property type="match status" value="1"/>
</dbReference>
<dbReference type="PROSITE" id="PS50262">
    <property type="entry name" value="G_PROTEIN_RECEP_F1_2"/>
    <property type="match status" value="1"/>
</dbReference>
<evidence type="ECO:0000255" key="1"/>
<evidence type="ECO:0000255" key="2">
    <source>
        <dbReference type="PROSITE-ProRule" id="PRU00521"/>
    </source>
</evidence>
<evidence type="ECO:0000269" key="3">
    <source>
    </source>
</evidence>
<evidence type="ECO:0000305" key="4"/>
<evidence type="ECO:0000312" key="5">
    <source>
        <dbReference type="HGNC" id="HGNC:19579"/>
    </source>
</evidence>
<reference key="1">
    <citation type="journal article" date="2006" name="Nature">
        <title>Human chromosome 11 DNA sequence and analysis including novel gene identification.</title>
        <authorList>
            <person name="Taylor T.D."/>
            <person name="Noguchi H."/>
            <person name="Totoki Y."/>
            <person name="Toyoda A."/>
            <person name="Kuroki Y."/>
            <person name="Dewar K."/>
            <person name="Lloyd C."/>
            <person name="Itoh T."/>
            <person name="Takeda T."/>
            <person name="Kim D.-W."/>
            <person name="She X."/>
            <person name="Barlow K.F."/>
            <person name="Bloom T."/>
            <person name="Bruford E."/>
            <person name="Chang J.L."/>
            <person name="Cuomo C.A."/>
            <person name="Eichler E."/>
            <person name="FitzGerald M.G."/>
            <person name="Jaffe D.B."/>
            <person name="LaButti K."/>
            <person name="Nicol R."/>
            <person name="Park H.-S."/>
            <person name="Seaman C."/>
            <person name="Sougnez C."/>
            <person name="Yang X."/>
            <person name="Zimmer A.R."/>
            <person name="Zody M.C."/>
            <person name="Birren B.W."/>
            <person name="Nusbaum C."/>
            <person name="Fujiyama A."/>
            <person name="Hattori M."/>
            <person name="Rogers J."/>
            <person name="Lander E.S."/>
            <person name="Sakaki Y."/>
        </authorList>
    </citation>
    <scope>NUCLEOTIDE SEQUENCE [LARGE SCALE GENOMIC DNA]</scope>
</reference>
<reference key="2">
    <citation type="journal article" date="2004" name="Genome Res.">
        <title>The status, quality, and expansion of the NIH full-length cDNA project: the Mammalian Gene Collection (MGC).</title>
        <authorList>
            <consortium name="The MGC Project Team"/>
        </authorList>
    </citation>
    <scope>NUCLEOTIDE SEQUENCE [LARGE SCALE MRNA]</scope>
    <scope>VARIANTS SER-180; ARG-277 AND ALA-303</scope>
</reference>
<proteinExistence type="evidence at transcript level"/>